<proteinExistence type="evidence at protein level"/>
<dbReference type="EMBL" id="CP000255">
    <property type="protein sequence ID" value="ABD22823.1"/>
    <property type="molecule type" value="Genomic_DNA"/>
</dbReference>
<dbReference type="RefSeq" id="WP_001010289.1">
    <property type="nucleotide sequence ID" value="NZ_CP027476.1"/>
</dbReference>
<dbReference type="SMR" id="A0A0H2XIK2"/>
<dbReference type="GeneID" id="66838591"/>
<dbReference type="KEGG" id="saa:SAUSA300_0284"/>
<dbReference type="HOGENOM" id="CLU_1936813_0_0_9"/>
<dbReference type="Proteomes" id="UP000001939">
    <property type="component" value="Chromosome"/>
</dbReference>
<dbReference type="GO" id="GO:0005576">
    <property type="term" value="C:extracellular region"/>
    <property type="evidence" value="ECO:0007669"/>
    <property type="project" value="UniProtKB-SubCell"/>
</dbReference>
<reference key="1">
    <citation type="journal article" date="2006" name="Lancet">
        <title>Complete genome sequence of USA300, an epidemic clone of community-acquired meticillin-resistant Staphylococcus aureus.</title>
        <authorList>
            <person name="Diep B.A."/>
            <person name="Gill S.R."/>
            <person name="Chang R.F."/>
            <person name="Phan T.H."/>
            <person name="Chen J.H."/>
            <person name="Davidson M.G."/>
            <person name="Lin F."/>
            <person name="Lin J."/>
            <person name="Carleton H.A."/>
            <person name="Mongodin E.F."/>
            <person name="Sensabaugh G.F."/>
            <person name="Perdreau-Remington F."/>
        </authorList>
    </citation>
    <scope>NUCLEOTIDE SEQUENCE [LARGE SCALE GENOMIC DNA]</scope>
    <source>
        <strain>USA300</strain>
    </source>
</reference>
<reference key="2">
    <citation type="journal article" date="2013" name="Mol. Microbiol.">
        <title>Secretion of atypical protein substrates by the ESAT-6 secretion system of Staphylococcus aureus.</title>
        <authorList>
            <person name="Anderson M."/>
            <person name="Aly K.A."/>
            <person name="Chen Y.H."/>
            <person name="Missiakas D."/>
        </authorList>
    </citation>
    <scope>SUBUNIT</scope>
    <scope>SUBCELLULAR LOCATION</scope>
    <source>
        <strain>USA300</strain>
    </source>
</reference>
<reference key="3">
    <citation type="journal article" date="2018" name="Toxicon">
        <title>The C-terminus of the ESAT6-like secretion system virulence factor EsxC mediates divalent cation-dependent homodimerization.</title>
        <authorList>
            <person name="Abd El-Fatah R.M."/>
            <person name="Mesbah N.M."/>
            <person name="Abo-Elmatty D.M."/>
            <person name="Aly K.A."/>
        </authorList>
    </citation>
    <scope>SUBUNIT</scope>
</reference>
<gene>
    <name evidence="4" type="primary">esxC</name>
    <name evidence="4" type="synonym">esaC</name>
    <name evidence="6" type="ordered locus">SAUSA300_0284</name>
</gene>
<feature type="chain" id="PRO_0000437375" description="Type VII secretion system extracellular protein C">
    <location>
        <begin position="1"/>
        <end position="130"/>
    </location>
</feature>
<organism>
    <name type="scientific">Staphylococcus aureus (strain USA300)</name>
    <dbReference type="NCBI Taxonomy" id="367830"/>
    <lineage>
        <taxon>Bacteria</taxon>
        <taxon>Bacillati</taxon>
        <taxon>Bacillota</taxon>
        <taxon>Bacilli</taxon>
        <taxon>Bacillales</taxon>
        <taxon>Staphylococcaceae</taxon>
        <taxon>Staphylococcus</taxon>
    </lineage>
</organism>
<sequence>MNFNDIETMVKSKFKDIKKHAEEIAHEIEVRSGYLRKAEQYKRLEFNLSFALDDIESTAKDVQTAKSSANKDSVTVKGKAPNTLYIEKRNLMKQKLEMLGEDIDKNKESLQKAKEIAGEKASEYFNKAMN</sequence>
<protein>
    <recommendedName>
        <fullName evidence="5">Type VII secretion system extracellular protein C</fullName>
        <shortName evidence="5">Ess extracellular protein C</shortName>
    </recommendedName>
</protein>
<accession>A0A0H2XIK2</accession>
<name>ESXC_STAA3</name>
<keyword id="KW-0964">Secreted</keyword>
<keyword id="KW-0843">Virulence</keyword>
<comment type="subunit">
    <text evidence="2 3">Forms both homodimers and heterodimers with EsxA (PubMed:24033479). Homodimerization is calcium-dependent (PubMed:29499245).</text>
</comment>
<comment type="subcellular location">
    <subcellularLocation>
        <location evidence="2">Secreted</location>
    </subcellularLocation>
    <text evidence="1">Secreted via the ESAT-6 secretion system (Ess) / type VII secretion system (T7SS).</text>
</comment>
<comment type="similarity">
    <text evidence="5">Belongs to the EsxC family.</text>
</comment>
<evidence type="ECO:0000250" key="1">
    <source>
        <dbReference type="UniProtKB" id="P0C051"/>
    </source>
</evidence>
<evidence type="ECO:0000269" key="2">
    <source>
    </source>
</evidence>
<evidence type="ECO:0000269" key="3">
    <source>
    </source>
</evidence>
<evidence type="ECO:0000303" key="4">
    <source>
    </source>
</evidence>
<evidence type="ECO:0000305" key="5"/>
<evidence type="ECO:0000312" key="6">
    <source>
        <dbReference type="EMBL" id="ABD22823.1"/>
    </source>
</evidence>